<evidence type="ECO:0000269" key="1">
    <source>
    </source>
</evidence>
<evidence type="ECO:0000305" key="2"/>
<organism evidence="2">
    <name type="scientific">Sepia officinalis</name>
    <name type="common">Common cuttlefish</name>
    <dbReference type="NCBI Taxonomy" id="6610"/>
    <lineage>
        <taxon>Eukaryota</taxon>
        <taxon>Metazoa</taxon>
        <taxon>Spiralia</taxon>
        <taxon>Lophotrochozoa</taxon>
        <taxon>Mollusca</taxon>
        <taxon>Cephalopoda</taxon>
        <taxon>Coleoidea</taxon>
        <taxon>Decapodiformes</taxon>
        <taxon>Sepiida</taxon>
        <taxon>Sepiina</taxon>
        <taxon>Sepiidae</taxon>
        <taxon>Sepia</taxon>
    </lineage>
</organism>
<feature type="peptide" id="PRO_0000044216" description="Sperm-attracting peptide SepSAP">
    <location>
        <begin position="1"/>
        <end position="6"/>
    </location>
</feature>
<feature type="modified residue" description="Valine amide" evidence="1">
    <location>
        <position position="6"/>
    </location>
</feature>
<name>SAPP_SEPOF</name>
<reference evidence="2" key="1">
    <citation type="journal article" date="2002" name="Biochem. Biophys. Res. Commun.">
        <title>Fertilization in Sepia officinalis: the first mollusk sperm-attracting peptide.</title>
        <authorList>
            <person name="Zatylny C."/>
            <person name="Marvin L."/>
            <person name="Gagnon J."/>
            <person name="Henry J."/>
        </authorList>
    </citation>
    <scope>PROTEIN SEQUENCE</scope>
    <scope>FUNCTION</scope>
    <scope>DEVELOPMENTAL STAGE</scope>
    <scope>MASS SPECTROMETRY</scope>
    <scope>AMIDATION AT VAL-6</scope>
    <source>
        <tissue>Egg</tissue>
    </source>
</reference>
<proteinExistence type="evidence at protein level"/>
<accession>P83569</accession>
<dbReference type="GO" id="GO:0005576">
    <property type="term" value="C:extracellular region"/>
    <property type="evidence" value="ECO:0007669"/>
    <property type="project" value="UniProtKB-SubCell"/>
</dbReference>
<keyword id="KW-0027">Amidation</keyword>
<keyword id="KW-0903">Direct protein sequencing</keyword>
<keyword id="KW-0964">Secreted</keyword>
<sequence length="6" mass="597">PIDPGV</sequence>
<comment type="function">
    <text evidence="1">Attracts sperm increasing the chances of gamete collision.</text>
</comment>
<comment type="subcellular location">
    <subcellularLocation>
        <location>Secreted</location>
    </subcellularLocation>
</comment>
<comment type="developmental stage">
    <text evidence="1">First appears in the ovarian follicles furing vitellogenesis. Accumulates in the oocytes before being secreted during fertilization. Expression continues in the embedded oocyte. Accumulates in the egg capsule after fertilization.</text>
</comment>
<comment type="mass spectrometry" mass="596.6" method="MALDI" evidence="1"/>
<protein>
    <recommendedName>
        <fullName>Sperm-attracting peptide SepSAP</fullName>
    </recommendedName>
</protein>